<reference key="1">
    <citation type="journal article" date="2000" name="Mol. Microbiol.">
        <title>The NRAMP proteins of Salmonella typhimurium and Escherichia coli are selective manganese transporters involved in the response to reactive oxygen.</title>
        <authorList>
            <person name="Kehres D.G."/>
            <person name="Zaharik M.L."/>
            <person name="Finlay B.B."/>
            <person name="Maguire M.E."/>
        </authorList>
    </citation>
    <scope>NUCLEOTIDE SEQUENCE [GENOMIC DNA]</scope>
    <source>
        <strain>ATCC 47053 / PAO1024 / MM2002</strain>
    </source>
</reference>
<reference key="2">
    <citation type="journal article" date="2000" name="Nature">
        <title>Complete genome sequence of Pseudomonas aeruginosa PAO1, an opportunistic pathogen.</title>
        <authorList>
            <person name="Stover C.K."/>
            <person name="Pham X.-Q.T."/>
            <person name="Erwin A.L."/>
            <person name="Mizoguchi S.D."/>
            <person name="Warrener P."/>
            <person name="Hickey M.J."/>
            <person name="Brinkman F.S.L."/>
            <person name="Hufnagle W.O."/>
            <person name="Kowalik D.J."/>
            <person name="Lagrou M."/>
            <person name="Garber R.L."/>
            <person name="Goltry L."/>
            <person name="Tolentino E."/>
            <person name="Westbrock-Wadman S."/>
            <person name="Yuan Y."/>
            <person name="Brody L.L."/>
            <person name="Coulter S.N."/>
            <person name="Folger K.R."/>
            <person name="Kas A."/>
            <person name="Larbig K."/>
            <person name="Lim R.M."/>
            <person name="Smith K.A."/>
            <person name="Spencer D.H."/>
            <person name="Wong G.K.-S."/>
            <person name="Wu Z."/>
            <person name="Paulsen I.T."/>
            <person name="Reizer J."/>
            <person name="Saier M.H. Jr."/>
            <person name="Hancock R.E.W."/>
            <person name="Lory S."/>
            <person name="Olson M.V."/>
        </authorList>
    </citation>
    <scope>NUCLEOTIDE SEQUENCE [LARGE SCALE GENOMIC DNA]</scope>
    <source>
        <strain>ATCC 15692 / DSM 22644 / CIP 104116 / JCM 14847 / LMG 12228 / 1C / PRS 101 / PAO1</strain>
    </source>
</reference>
<protein>
    <recommendedName>
        <fullName evidence="1">Divalent metal cation transporter MntH 1</fullName>
    </recommendedName>
</protein>
<comment type="function">
    <text evidence="1">H(+)-stimulated, divalent metal cation uptake system.</text>
</comment>
<comment type="subcellular location">
    <subcellularLocation>
        <location>Cell inner membrane</location>
        <topology>Multi-pass membrane protein</topology>
    </subcellularLocation>
</comment>
<comment type="similarity">
    <text evidence="1">Belongs to the NRAMP family.</text>
</comment>
<comment type="sequence caution" evidence="2">
    <conflict type="erroneous initiation">
        <sequence resource="EMBL-CDS" id="AAD46618"/>
    </conflict>
    <text>Truncated N-terminus.</text>
</comment>
<comment type="sequence caution" evidence="2">
    <conflict type="erroneous initiation">
        <sequence resource="EMBL-CDS" id="AAG07722"/>
    </conflict>
    <text>Truncated N-terminus.</text>
</comment>
<organism>
    <name type="scientific">Pseudomonas aeruginosa (strain ATCC 15692 / DSM 22644 / CIP 104116 / JCM 14847 / LMG 12228 / 1C / PRS 101 / PAO1)</name>
    <dbReference type="NCBI Taxonomy" id="208964"/>
    <lineage>
        <taxon>Bacteria</taxon>
        <taxon>Pseudomonadati</taxon>
        <taxon>Pseudomonadota</taxon>
        <taxon>Gammaproteobacteria</taxon>
        <taxon>Pseudomonadales</taxon>
        <taxon>Pseudomonadaceae</taxon>
        <taxon>Pseudomonas</taxon>
    </lineage>
</organism>
<gene>
    <name evidence="1" type="primary">mntH1</name>
    <name type="ordered locus">PA4334</name>
</gene>
<accession>Q9RPF3</accession>
<accession>Q9HW67</accession>
<evidence type="ECO:0000255" key="1">
    <source>
        <dbReference type="HAMAP-Rule" id="MF_00221"/>
    </source>
</evidence>
<evidence type="ECO:0000305" key="2"/>
<sequence>MKYSLPTTATAPFCPSAVSHSVAVPADASPLRKLALFVGPGLLVSVGYMDPGNWATAIEAGSRFGYALLFVVVLASFSGMLLQSLCSRLGIATGRDLAQLSRERYRPGVARGQWLLAELSIVATDLAEVLGAALAFHLLLGVSITTGVVLTAFDTLIVLALQGANFRRLEAIVLGLIATIGACFFVELVLIGPYWPDVAAGLRPSWDTLSSQEPLYLAIGILGATVMPHNLYLHSSVVQTRVSGDDAASKRSAIRFSRLDTIGSLSLALLVNAAILILAAAAFHGSGHTEVVEIQDAYHLLDPLVGGALASFLFGFALLAAGQSSTFTGTIAGQVVMEGFLRAKIPCWQRRLITRGLALVPALIGVLWLGEAAVGKLLVLSQVVLSLQLPFALWPLIRFSSDRGLMGEFVNPRWVSALAWSLFGLISAANLTLLYFWFG</sequence>
<keyword id="KW-0997">Cell inner membrane</keyword>
<keyword id="KW-1003">Cell membrane</keyword>
<keyword id="KW-0406">Ion transport</keyword>
<keyword id="KW-0472">Membrane</keyword>
<keyword id="KW-1185">Reference proteome</keyword>
<keyword id="KW-0769">Symport</keyword>
<keyword id="KW-0812">Transmembrane</keyword>
<keyword id="KW-1133">Transmembrane helix</keyword>
<keyword id="KW-0813">Transport</keyword>
<dbReference type="EMBL" id="AF161319">
    <property type="protein sequence ID" value="AAD46618.1"/>
    <property type="status" value="ALT_INIT"/>
    <property type="molecule type" value="Genomic_DNA"/>
</dbReference>
<dbReference type="EMBL" id="AE004091">
    <property type="protein sequence ID" value="AAG07722.1"/>
    <property type="status" value="ALT_INIT"/>
    <property type="molecule type" value="Genomic_DNA"/>
</dbReference>
<dbReference type="PIR" id="B83105">
    <property type="entry name" value="B83105"/>
</dbReference>
<dbReference type="RefSeq" id="NP_253024.1">
    <property type="nucleotide sequence ID" value="NC_002516.2"/>
</dbReference>
<dbReference type="SMR" id="Q9RPF3"/>
<dbReference type="FunCoup" id="Q9RPF3">
    <property type="interactions" value="396"/>
</dbReference>
<dbReference type="STRING" id="208964.PA4334"/>
<dbReference type="PaxDb" id="208964-PA4334"/>
<dbReference type="GeneID" id="881479"/>
<dbReference type="KEGG" id="pae:PA4334"/>
<dbReference type="PATRIC" id="fig|208964.12.peg.4539"/>
<dbReference type="PseudoCAP" id="PA4334"/>
<dbReference type="HOGENOM" id="CLU_020088_2_0_6"/>
<dbReference type="InParanoid" id="Q9RPF3"/>
<dbReference type="OrthoDB" id="9787548at2"/>
<dbReference type="PhylomeDB" id="Q9RPF3"/>
<dbReference type="Proteomes" id="UP000002438">
    <property type="component" value="Chromosome"/>
</dbReference>
<dbReference type="GO" id="GO:0005886">
    <property type="term" value="C:plasma membrane"/>
    <property type="evidence" value="ECO:0007669"/>
    <property type="project" value="UniProtKB-SubCell"/>
</dbReference>
<dbReference type="GO" id="GO:0046872">
    <property type="term" value="F:metal ion binding"/>
    <property type="evidence" value="ECO:0007669"/>
    <property type="project" value="UniProtKB-UniRule"/>
</dbReference>
<dbReference type="GO" id="GO:0046873">
    <property type="term" value="F:metal ion transmembrane transporter activity"/>
    <property type="evidence" value="ECO:0007669"/>
    <property type="project" value="InterPro"/>
</dbReference>
<dbReference type="GO" id="GO:0015293">
    <property type="term" value="F:symporter activity"/>
    <property type="evidence" value="ECO:0007669"/>
    <property type="project" value="UniProtKB-UniRule"/>
</dbReference>
<dbReference type="HAMAP" id="MF_00221">
    <property type="entry name" value="NRAMP"/>
    <property type="match status" value="1"/>
</dbReference>
<dbReference type="InterPro" id="IPR001046">
    <property type="entry name" value="NRAMP_fam"/>
</dbReference>
<dbReference type="NCBIfam" id="TIGR01197">
    <property type="entry name" value="nramp"/>
    <property type="match status" value="1"/>
</dbReference>
<dbReference type="NCBIfam" id="NF037982">
    <property type="entry name" value="Nramp_1"/>
    <property type="match status" value="1"/>
</dbReference>
<dbReference type="NCBIfam" id="NF001923">
    <property type="entry name" value="PRK00701.1"/>
    <property type="match status" value="1"/>
</dbReference>
<dbReference type="PANTHER" id="PTHR11706:SF101">
    <property type="entry name" value="MANGANESE TRANSPORTER SMF1"/>
    <property type="match status" value="1"/>
</dbReference>
<dbReference type="PANTHER" id="PTHR11706">
    <property type="entry name" value="SOLUTE CARRIER PROTEIN FAMILY 11 MEMBER"/>
    <property type="match status" value="1"/>
</dbReference>
<dbReference type="Pfam" id="PF01566">
    <property type="entry name" value="Nramp"/>
    <property type="match status" value="1"/>
</dbReference>
<dbReference type="PRINTS" id="PR00447">
    <property type="entry name" value="NATRESASSCMP"/>
</dbReference>
<name>MNTH1_PSEAE</name>
<proteinExistence type="inferred from homology"/>
<feature type="chain" id="PRO_0000212628" description="Divalent metal cation transporter MntH 1">
    <location>
        <begin position="1"/>
        <end position="439"/>
    </location>
</feature>
<feature type="transmembrane region" description="Helical" evidence="1">
    <location>
        <begin position="64"/>
        <end position="84"/>
    </location>
</feature>
<feature type="transmembrane region" description="Helical" evidence="1">
    <location>
        <begin position="139"/>
        <end position="161"/>
    </location>
</feature>
<feature type="transmembrane region" description="Helical" evidence="1">
    <location>
        <begin position="171"/>
        <end position="191"/>
    </location>
</feature>
<feature type="transmembrane region" description="Helical" evidence="1">
    <location>
        <begin position="214"/>
        <end position="234"/>
    </location>
</feature>
<feature type="transmembrane region" description="Helical" evidence="1">
    <location>
        <begin position="262"/>
        <end position="282"/>
    </location>
</feature>
<feature type="transmembrane region" description="Helical" evidence="1">
    <location>
        <begin position="300"/>
        <end position="320"/>
    </location>
</feature>
<feature type="transmembrane region" description="Helical" evidence="1">
    <location>
        <begin position="359"/>
        <end position="379"/>
    </location>
</feature>
<feature type="transmembrane region" description="Helical" evidence="1">
    <location>
        <begin position="380"/>
        <end position="400"/>
    </location>
</feature>
<feature type="transmembrane region" description="Helical" evidence="1">
    <location>
        <begin position="418"/>
        <end position="438"/>
    </location>
</feature>